<name>PALB_DEBHA</name>
<protein>
    <recommendedName>
        <fullName>Calpain-like protease palB/RIM13</fullName>
        <ecNumber>3.4.22.-</ecNumber>
    </recommendedName>
    <alternativeName>
        <fullName>Cysteine protease RIM13</fullName>
    </alternativeName>
</protein>
<evidence type="ECO:0000250" key="1"/>
<evidence type="ECO:0000255" key="2">
    <source>
        <dbReference type="PROSITE-ProRule" id="PRU00239"/>
    </source>
</evidence>
<evidence type="ECO:0000305" key="3"/>
<gene>
    <name type="ordered locus">DEHA2G20988g</name>
</gene>
<organism>
    <name type="scientific">Debaryomyces hansenii (strain ATCC 36239 / CBS 767 / BCRC 21394 / JCM 1990 / NBRC 0083 / IGC 2968)</name>
    <name type="common">Yeast</name>
    <name type="synonym">Torulaspora hansenii</name>
    <dbReference type="NCBI Taxonomy" id="284592"/>
    <lineage>
        <taxon>Eukaryota</taxon>
        <taxon>Fungi</taxon>
        <taxon>Dikarya</taxon>
        <taxon>Ascomycota</taxon>
        <taxon>Saccharomycotina</taxon>
        <taxon>Pichiomycetes</taxon>
        <taxon>Debaryomycetaceae</taxon>
        <taxon>Debaryomyces</taxon>
    </lineage>
</organism>
<reference key="1">
    <citation type="journal article" date="2004" name="Nature">
        <title>Genome evolution in yeasts.</title>
        <authorList>
            <person name="Dujon B."/>
            <person name="Sherman D."/>
            <person name="Fischer G."/>
            <person name="Durrens P."/>
            <person name="Casaregola S."/>
            <person name="Lafontaine I."/>
            <person name="de Montigny J."/>
            <person name="Marck C."/>
            <person name="Neuveglise C."/>
            <person name="Talla E."/>
            <person name="Goffard N."/>
            <person name="Frangeul L."/>
            <person name="Aigle M."/>
            <person name="Anthouard V."/>
            <person name="Babour A."/>
            <person name="Barbe V."/>
            <person name="Barnay S."/>
            <person name="Blanchin S."/>
            <person name="Beckerich J.-M."/>
            <person name="Beyne E."/>
            <person name="Bleykasten C."/>
            <person name="Boisrame A."/>
            <person name="Boyer J."/>
            <person name="Cattolico L."/>
            <person name="Confanioleri F."/>
            <person name="de Daruvar A."/>
            <person name="Despons L."/>
            <person name="Fabre E."/>
            <person name="Fairhead C."/>
            <person name="Ferry-Dumazet H."/>
            <person name="Groppi A."/>
            <person name="Hantraye F."/>
            <person name="Hennequin C."/>
            <person name="Jauniaux N."/>
            <person name="Joyet P."/>
            <person name="Kachouri R."/>
            <person name="Kerrest A."/>
            <person name="Koszul R."/>
            <person name="Lemaire M."/>
            <person name="Lesur I."/>
            <person name="Ma L."/>
            <person name="Muller H."/>
            <person name="Nicaud J.-M."/>
            <person name="Nikolski M."/>
            <person name="Oztas S."/>
            <person name="Ozier-Kalogeropoulos O."/>
            <person name="Pellenz S."/>
            <person name="Potier S."/>
            <person name="Richard G.-F."/>
            <person name="Straub M.-L."/>
            <person name="Suleau A."/>
            <person name="Swennen D."/>
            <person name="Tekaia F."/>
            <person name="Wesolowski-Louvel M."/>
            <person name="Westhof E."/>
            <person name="Wirth B."/>
            <person name="Zeniou-Meyer M."/>
            <person name="Zivanovic Y."/>
            <person name="Bolotin-Fukuhara M."/>
            <person name="Thierry A."/>
            <person name="Bouchier C."/>
            <person name="Caudron B."/>
            <person name="Scarpelli C."/>
            <person name="Gaillardin C."/>
            <person name="Weissenbach J."/>
            <person name="Wincker P."/>
            <person name="Souciet J.-L."/>
        </authorList>
    </citation>
    <scope>NUCLEOTIDE SEQUENCE [LARGE SCALE GENOMIC DNA]</scope>
    <source>
        <strain>ATCC 36239 / CBS 767 / BCRC 21394 / JCM 1990 / NBRC 0083 / IGC 2968</strain>
    </source>
</reference>
<feature type="chain" id="PRO_0000207741" description="Calpain-like protease palB/RIM13">
    <location>
        <begin position="1"/>
        <end position="764"/>
    </location>
</feature>
<feature type="domain" description="Calpain catalytic" evidence="2">
    <location>
        <begin position="95"/>
        <end position="368"/>
    </location>
</feature>
<feature type="active site" evidence="2">
    <location>
        <position position="165"/>
    </location>
</feature>
<feature type="active site" evidence="2">
    <location>
        <position position="318"/>
    </location>
</feature>
<feature type="active site" evidence="2">
    <location>
        <position position="336"/>
    </location>
</feature>
<sequence>MEEKELRQDLYECVSLLDVAHFNCCLGNENNAKQQCLEIVKILNRLSKTKAFKEGYHSIIKDISSYTLKFYDSIDKGNHFTYSEKIMWLSSKLYGEFYPPLTVYSHKLDSFHSYLLPIQKVIKEKTDILPLPESLNAHYEQVDIKNWTLDYNALSELYQDLLTNCSFVSSLLSIVELDRKDLLENLISPRQDSSIFKCQLYFNGSSRLVTIDNTLPFLNDSNRNLTINSNENLYWPALVEKAYLKVLGSGYKFEGSNMAIDTYMLTTWIPEIVPINNSKLYDCDDVWENYLSKSVLLGIGTGKLSVELSKKLNFISGHDYLVTSFDPITHTIVLKNPWIENDNSYKRTLTISDQDLHHFKYFYINWNPNAFFKYKFHMTFIYNVKDNTGTHMYQKPQFSLLNPTEDSQNVWLLLEKHLPLKNFSEQLINILIYETQLGDKVIVSNQCIRANKDSSTNSRLMLLKFTMKPKQAYTIVISSTIANTFTLNMYNNISRDFTFTKAKFKYPTTIPTFKDKWTSDNSGGNWSLSTYIDNPQYDIEVKTLPTNIMIGLFSEFKDKFVNFHIFQSDPSGKGHRIRLFDKSKLLVNEKYSMTYQFEDFKSLQPGFYKIVASAFDNNLNGAFELLAIHDSPPNNISITKIHPSLGLFLQKKEFDWNSSNRFKLYFKATQFSSRFTFHLKHYSHINKNTESLSDYRPFIRGSIFDAENSQPIQINEEWNDSLYGLFIDCDIQKPKTYILLVERFESGSGRCKVDIGCNRKFNIL</sequence>
<proteinExistence type="inferred from homology"/>
<keyword id="KW-0378">Hydrolase</keyword>
<keyword id="KW-0645">Protease</keyword>
<keyword id="KW-1185">Reference proteome</keyword>
<keyword id="KW-0788">Thiol protease</keyword>
<dbReference type="EC" id="3.4.22.-"/>
<dbReference type="EMBL" id="CR382139">
    <property type="protein sequence ID" value="CAG90965.2"/>
    <property type="molecule type" value="Genomic_DNA"/>
</dbReference>
<dbReference type="RefSeq" id="XP_462455.2">
    <property type="nucleotide sequence ID" value="XM_462455.1"/>
</dbReference>
<dbReference type="FunCoup" id="Q6BH66">
    <property type="interactions" value="29"/>
</dbReference>
<dbReference type="STRING" id="284592.Q6BH66"/>
<dbReference type="MEROPS" id="C02.008"/>
<dbReference type="GeneID" id="2905404"/>
<dbReference type="KEGG" id="dha:DEHA2G20988g"/>
<dbReference type="VEuPathDB" id="FungiDB:DEHA2G20988g"/>
<dbReference type="eggNOG" id="KOG0045">
    <property type="taxonomic scope" value="Eukaryota"/>
</dbReference>
<dbReference type="HOGENOM" id="CLU_023416_0_0_1"/>
<dbReference type="InParanoid" id="Q6BH66"/>
<dbReference type="OMA" id="GWLPQII"/>
<dbReference type="OrthoDB" id="167576at2759"/>
<dbReference type="Proteomes" id="UP000000599">
    <property type="component" value="Chromosome G"/>
</dbReference>
<dbReference type="GO" id="GO:0004198">
    <property type="term" value="F:calcium-dependent cysteine-type endopeptidase activity"/>
    <property type="evidence" value="ECO:0007669"/>
    <property type="project" value="InterPro"/>
</dbReference>
<dbReference type="GO" id="GO:0006508">
    <property type="term" value="P:proteolysis"/>
    <property type="evidence" value="ECO:0007669"/>
    <property type="project" value="UniProtKB-KW"/>
</dbReference>
<dbReference type="Gene3D" id="2.60.120.380">
    <property type="match status" value="1"/>
</dbReference>
<dbReference type="InterPro" id="IPR022684">
    <property type="entry name" value="Calpain_cysteine_protease"/>
</dbReference>
<dbReference type="InterPro" id="IPR022682">
    <property type="entry name" value="Calpain_domain_III"/>
</dbReference>
<dbReference type="InterPro" id="IPR036213">
    <property type="entry name" value="Calpain_III_sf"/>
</dbReference>
<dbReference type="InterPro" id="IPR051297">
    <property type="entry name" value="PalB/RIM13_Calpain-like"/>
</dbReference>
<dbReference type="InterPro" id="IPR038765">
    <property type="entry name" value="Papain-like_cys_pep_sf"/>
</dbReference>
<dbReference type="InterPro" id="IPR001300">
    <property type="entry name" value="Peptidase_C2_calpain_cat"/>
</dbReference>
<dbReference type="PANTHER" id="PTHR46143">
    <property type="entry name" value="CALPAIN-7"/>
    <property type="match status" value="1"/>
</dbReference>
<dbReference type="PANTHER" id="PTHR46143:SF1">
    <property type="entry name" value="CALPAIN-7"/>
    <property type="match status" value="1"/>
</dbReference>
<dbReference type="Pfam" id="PF01067">
    <property type="entry name" value="Calpain_III"/>
    <property type="match status" value="1"/>
</dbReference>
<dbReference type="Pfam" id="PF00648">
    <property type="entry name" value="Peptidase_C2"/>
    <property type="match status" value="1"/>
</dbReference>
<dbReference type="PRINTS" id="PR00704">
    <property type="entry name" value="CALPAIN"/>
</dbReference>
<dbReference type="SMART" id="SM00230">
    <property type="entry name" value="CysPc"/>
    <property type="match status" value="1"/>
</dbReference>
<dbReference type="SUPFAM" id="SSF49758">
    <property type="entry name" value="Calpain large subunit, middle domain (domain III)"/>
    <property type="match status" value="2"/>
</dbReference>
<dbReference type="SUPFAM" id="SSF54001">
    <property type="entry name" value="Cysteine proteinases"/>
    <property type="match status" value="1"/>
</dbReference>
<dbReference type="PROSITE" id="PS50203">
    <property type="entry name" value="CALPAIN_CAT"/>
    <property type="match status" value="1"/>
</dbReference>
<accession>Q6BH66</accession>
<comment type="function">
    <text evidence="1">Required for the proteolytic cleavage of the transcription factor RIM101 in response to alkaline ambient pH.</text>
</comment>
<comment type="similarity">
    <text evidence="3">Belongs to the peptidase C2 family. PalB/RIM13 subfamily.</text>
</comment>